<sequence>MKFAVVVFPGSNCDVDMYHAIADELGEEVEYVWHDEDNLDRFDAVLLPGGFSYGDYLRSGAIARFSKVMAAVKKAAEAGKPVLGVCNGFQILLEAGLLPGAMRRNQGLKFICRPVQLTVENHETMFTSAYEKGEVITIPIAHGEGNYYCDEQTLERLVENRQIVFRYHGENPNGSLADIAGIVNEQGNVLGMMPHPERAVDALLGSADGLKLFRSIVNYWRETHVVTA</sequence>
<evidence type="ECO:0000255" key="1">
    <source>
        <dbReference type="HAMAP-Rule" id="MF_00421"/>
    </source>
</evidence>
<reference key="1">
    <citation type="journal article" date="2004" name="Nucleic Acids Res.">
        <title>Thermoadaptation trait revealed by the genome sequence of thermophilic Geobacillus kaustophilus.</title>
        <authorList>
            <person name="Takami H."/>
            <person name="Takaki Y."/>
            <person name="Chee G.-J."/>
            <person name="Nishi S."/>
            <person name="Shimamura S."/>
            <person name="Suzuki H."/>
            <person name="Matsui S."/>
            <person name="Uchiyama I."/>
        </authorList>
    </citation>
    <scope>NUCLEOTIDE SEQUENCE [LARGE SCALE GENOMIC DNA]</scope>
    <source>
        <strain>HTA426</strain>
    </source>
</reference>
<gene>
    <name evidence="1" type="primary">purQ</name>
    <name type="ordered locus">GK0262</name>
</gene>
<dbReference type="EC" id="6.3.5.3" evidence="1"/>
<dbReference type="EC" id="3.5.1.2" evidence="1"/>
<dbReference type="EMBL" id="BA000043">
    <property type="protein sequence ID" value="BAD74547.1"/>
    <property type="molecule type" value="Genomic_DNA"/>
</dbReference>
<dbReference type="RefSeq" id="WP_011229771.1">
    <property type="nucleotide sequence ID" value="NC_006510.1"/>
</dbReference>
<dbReference type="SMR" id="Q5L3D3"/>
<dbReference type="STRING" id="235909.GK0262"/>
<dbReference type="KEGG" id="gka:GK0262"/>
<dbReference type="eggNOG" id="COG0047">
    <property type="taxonomic scope" value="Bacteria"/>
</dbReference>
<dbReference type="HOGENOM" id="CLU_001031_3_1_9"/>
<dbReference type="UniPathway" id="UPA00074">
    <property type="reaction ID" value="UER00128"/>
</dbReference>
<dbReference type="Proteomes" id="UP000001172">
    <property type="component" value="Chromosome"/>
</dbReference>
<dbReference type="GO" id="GO:0005737">
    <property type="term" value="C:cytoplasm"/>
    <property type="evidence" value="ECO:0007669"/>
    <property type="project" value="UniProtKB-SubCell"/>
</dbReference>
<dbReference type="GO" id="GO:0005524">
    <property type="term" value="F:ATP binding"/>
    <property type="evidence" value="ECO:0007669"/>
    <property type="project" value="UniProtKB-KW"/>
</dbReference>
<dbReference type="GO" id="GO:0004359">
    <property type="term" value="F:glutaminase activity"/>
    <property type="evidence" value="ECO:0007669"/>
    <property type="project" value="UniProtKB-EC"/>
</dbReference>
<dbReference type="GO" id="GO:0004642">
    <property type="term" value="F:phosphoribosylformylglycinamidine synthase activity"/>
    <property type="evidence" value="ECO:0007669"/>
    <property type="project" value="UniProtKB-UniRule"/>
</dbReference>
<dbReference type="GO" id="GO:0006189">
    <property type="term" value="P:'de novo' IMP biosynthetic process"/>
    <property type="evidence" value="ECO:0007669"/>
    <property type="project" value="UniProtKB-UniRule"/>
</dbReference>
<dbReference type="CDD" id="cd01740">
    <property type="entry name" value="GATase1_FGAR_AT"/>
    <property type="match status" value="1"/>
</dbReference>
<dbReference type="FunFam" id="3.40.50.880:FF:000019">
    <property type="entry name" value="Phosphoribosylformylglycinamidine synthase subunit PurQ"/>
    <property type="match status" value="1"/>
</dbReference>
<dbReference type="Gene3D" id="3.40.50.880">
    <property type="match status" value="1"/>
</dbReference>
<dbReference type="HAMAP" id="MF_00421">
    <property type="entry name" value="PurQ"/>
    <property type="match status" value="1"/>
</dbReference>
<dbReference type="InterPro" id="IPR029062">
    <property type="entry name" value="Class_I_gatase-like"/>
</dbReference>
<dbReference type="InterPro" id="IPR010075">
    <property type="entry name" value="PRibForGlyAmidine_synth_PurQ"/>
</dbReference>
<dbReference type="NCBIfam" id="TIGR01737">
    <property type="entry name" value="FGAM_synth_I"/>
    <property type="match status" value="1"/>
</dbReference>
<dbReference type="NCBIfam" id="NF002957">
    <property type="entry name" value="PRK03619.1"/>
    <property type="match status" value="1"/>
</dbReference>
<dbReference type="PANTHER" id="PTHR47552">
    <property type="entry name" value="PHOSPHORIBOSYLFORMYLGLYCINAMIDINE SYNTHASE SUBUNIT PURQ"/>
    <property type="match status" value="1"/>
</dbReference>
<dbReference type="PANTHER" id="PTHR47552:SF1">
    <property type="entry name" value="PHOSPHORIBOSYLFORMYLGLYCINAMIDINE SYNTHASE SUBUNIT PURQ"/>
    <property type="match status" value="1"/>
</dbReference>
<dbReference type="Pfam" id="PF13507">
    <property type="entry name" value="GATase_5"/>
    <property type="match status" value="1"/>
</dbReference>
<dbReference type="PIRSF" id="PIRSF001586">
    <property type="entry name" value="FGAM_synth_I"/>
    <property type="match status" value="1"/>
</dbReference>
<dbReference type="SMART" id="SM01211">
    <property type="entry name" value="GATase_5"/>
    <property type="match status" value="1"/>
</dbReference>
<dbReference type="SUPFAM" id="SSF52317">
    <property type="entry name" value="Class I glutamine amidotransferase-like"/>
    <property type="match status" value="1"/>
</dbReference>
<dbReference type="PROSITE" id="PS51273">
    <property type="entry name" value="GATASE_TYPE_1"/>
    <property type="match status" value="1"/>
</dbReference>
<protein>
    <recommendedName>
        <fullName evidence="1">Phosphoribosylformylglycinamidine synthase subunit PurQ</fullName>
        <shortName evidence="1">FGAM synthase</shortName>
        <ecNumber evidence="1">6.3.5.3</ecNumber>
    </recommendedName>
    <alternativeName>
        <fullName evidence="1">Formylglycinamide ribonucleotide amidotransferase subunit I</fullName>
        <shortName evidence="1">FGAR amidotransferase I</shortName>
        <shortName evidence="1">FGAR-AT I</shortName>
    </alternativeName>
    <alternativeName>
        <fullName evidence="1">Glutaminase PurQ</fullName>
        <ecNumber evidence="1">3.5.1.2</ecNumber>
    </alternativeName>
    <alternativeName>
        <fullName evidence="1">Phosphoribosylformylglycinamidine synthase subunit I</fullName>
    </alternativeName>
</protein>
<proteinExistence type="inferred from homology"/>
<keyword id="KW-0067">ATP-binding</keyword>
<keyword id="KW-0963">Cytoplasm</keyword>
<keyword id="KW-0315">Glutamine amidotransferase</keyword>
<keyword id="KW-0378">Hydrolase</keyword>
<keyword id="KW-0436">Ligase</keyword>
<keyword id="KW-0547">Nucleotide-binding</keyword>
<keyword id="KW-0658">Purine biosynthesis</keyword>
<keyword id="KW-1185">Reference proteome</keyword>
<organism>
    <name type="scientific">Geobacillus kaustophilus (strain HTA426)</name>
    <dbReference type="NCBI Taxonomy" id="235909"/>
    <lineage>
        <taxon>Bacteria</taxon>
        <taxon>Bacillati</taxon>
        <taxon>Bacillota</taxon>
        <taxon>Bacilli</taxon>
        <taxon>Bacillales</taxon>
        <taxon>Anoxybacillaceae</taxon>
        <taxon>Geobacillus</taxon>
        <taxon>Geobacillus thermoleovorans group</taxon>
    </lineage>
</organism>
<name>PURQ_GEOKA</name>
<feature type="chain" id="PRO_0000100554" description="Phosphoribosylformylglycinamidine synthase subunit PurQ">
    <location>
        <begin position="1"/>
        <end position="228"/>
    </location>
</feature>
<feature type="domain" description="Glutamine amidotransferase type-1" evidence="1">
    <location>
        <begin position="4"/>
        <end position="226"/>
    </location>
</feature>
<feature type="active site" description="Nucleophile" evidence="1">
    <location>
        <position position="86"/>
    </location>
</feature>
<feature type="active site" evidence="1">
    <location>
        <position position="195"/>
    </location>
</feature>
<feature type="active site" evidence="1">
    <location>
        <position position="197"/>
    </location>
</feature>
<accession>Q5L3D3</accession>
<comment type="function">
    <text evidence="1">Part of the phosphoribosylformylglycinamidine synthase complex involved in the purines biosynthetic pathway. Catalyzes the ATP-dependent conversion of formylglycinamide ribonucleotide (FGAR) and glutamine to yield formylglycinamidine ribonucleotide (FGAM) and glutamate. The FGAM synthase complex is composed of three subunits. PurQ produces an ammonia molecule by converting glutamine to glutamate. PurL transfers the ammonia molecule to FGAR to form FGAM in an ATP-dependent manner. PurS interacts with PurQ and PurL and is thought to assist in the transfer of the ammonia molecule from PurQ to PurL.</text>
</comment>
<comment type="catalytic activity">
    <reaction evidence="1">
        <text>N(2)-formyl-N(1)-(5-phospho-beta-D-ribosyl)glycinamide + L-glutamine + ATP + H2O = 2-formamido-N(1)-(5-O-phospho-beta-D-ribosyl)acetamidine + L-glutamate + ADP + phosphate + H(+)</text>
        <dbReference type="Rhea" id="RHEA:17129"/>
        <dbReference type="ChEBI" id="CHEBI:15377"/>
        <dbReference type="ChEBI" id="CHEBI:15378"/>
        <dbReference type="ChEBI" id="CHEBI:29985"/>
        <dbReference type="ChEBI" id="CHEBI:30616"/>
        <dbReference type="ChEBI" id="CHEBI:43474"/>
        <dbReference type="ChEBI" id="CHEBI:58359"/>
        <dbReference type="ChEBI" id="CHEBI:147286"/>
        <dbReference type="ChEBI" id="CHEBI:147287"/>
        <dbReference type="ChEBI" id="CHEBI:456216"/>
        <dbReference type="EC" id="6.3.5.3"/>
    </reaction>
</comment>
<comment type="catalytic activity">
    <reaction evidence="1">
        <text>L-glutamine + H2O = L-glutamate + NH4(+)</text>
        <dbReference type="Rhea" id="RHEA:15889"/>
        <dbReference type="ChEBI" id="CHEBI:15377"/>
        <dbReference type="ChEBI" id="CHEBI:28938"/>
        <dbReference type="ChEBI" id="CHEBI:29985"/>
        <dbReference type="ChEBI" id="CHEBI:58359"/>
        <dbReference type="EC" id="3.5.1.2"/>
    </reaction>
</comment>
<comment type="pathway">
    <text evidence="1">Purine metabolism; IMP biosynthesis via de novo pathway; 5-amino-1-(5-phospho-D-ribosyl)imidazole from N(2)-formyl-N(1)-(5-phospho-D-ribosyl)glycinamide: step 1/2.</text>
</comment>
<comment type="subunit">
    <text evidence="1">Part of the FGAM synthase complex composed of 1 PurL, 1 PurQ and 2 PurS subunits.</text>
</comment>
<comment type="subcellular location">
    <subcellularLocation>
        <location evidence="1">Cytoplasm</location>
    </subcellularLocation>
</comment>